<reference key="1">
    <citation type="submission" date="2005-08" db="EMBL/GenBank/DDBJ databases">
        <authorList>
            <consortium name="NIH - Zebrafish Gene Collection (ZGC) project"/>
        </authorList>
    </citation>
    <scope>NUCLEOTIDE SEQUENCE [LARGE SCALE MRNA]</scope>
    <source>
        <tissue>Embryo</tissue>
    </source>
</reference>
<proteinExistence type="evidence at transcript level"/>
<keyword id="KW-0496">Mitochondrion</keyword>
<keyword id="KW-1185">Reference proteome</keyword>
<keyword id="KW-0687">Ribonucleoprotein</keyword>
<keyword id="KW-0689">Ribosomal protein</keyword>
<keyword id="KW-0809">Transit peptide</keyword>
<dbReference type="EMBL" id="BC100013">
    <property type="protein sequence ID" value="AAI00014.1"/>
    <property type="molecule type" value="mRNA"/>
</dbReference>
<dbReference type="RefSeq" id="NP_001028768.1">
    <property type="nucleotide sequence ID" value="NM_001033596.1"/>
</dbReference>
<dbReference type="SMR" id="Q498Z6"/>
<dbReference type="FunCoup" id="Q498Z6">
    <property type="interactions" value="732"/>
</dbReference>
<dbReference type="STRING" id="7955.ENSDARP00000135472"/>
<dbReference type="PaxDb" id="7955-ENSDARP00000061664"/>
<dbReference type="GeneID" id="619204"/>
<dbReference type="KEGG" id="dre:619204"/>
<dbReference type="AGR" id="ZFIN:ZDB-GENE-050809-112"/>
<dbReference type="CTD" id="51081"/>
<dbReference type="ZFIN" id="ZDB-GENE-050809-112">
    <property type="gene designation" value="mrps7"/>
</dbReference>
<dbReference type="eggNOG" id="KOG3291">
    <property type="taxonomic scope" value="Eukaryota"/>
</dbReference>
<dbReference type="InParanoid" id="Q498Z6"/>
<dbReference type="OrthoDB" id="9972728at2759"/>
<dbReference type="PhylomeDB" id="Q498Z6"/>
<dbReference type="Reactome" id="R-DRE-5389840">
    <property type="pathway name" value="Mitochondrial translation elongation"/>
</dbReference>
<dbReference type="Reactome" id="R-DRE-5419276">
    <property type="pathway name" value="Mitochondrial translation termination"/>
</dbReference>
<dbReference type="PRO" id="PR:Q498Z6"/>
<dbReference type="Proteomes" id="UP000000437">
    <property type="component" value="Chromosome 3"/>
</dbReference>
<dbReference type="GO" id="GO:0005763">
    <property type="term" value="C:mitochondrial small ribosomal subunit"/>
    <property type="evidence" value="ECO:0000250"/>
    <property type="project" value="UniProtKB"/>
</dbReference>
<dbReference type="GO" id="GO:0005840">
    <property type="term" value="C:ribosome"/>
    <property type="evidence" value="ECO:0000318"/>
    <property type="project" value="GO_Central"/>
</dbReference>
<dbReference type="GO" id="GO:0003729">
    <property type="term" value="F:mRNA binding"/>
    <property type="evidence" value="ECO:0000318"/>
    <property type="project" value="GO_Central"/>
</dbReference>
<dbReference type="GO" id="GO:0019843">
    <property type="term" value="F:rRNA binding"/>
    <property type="evidence" value="ECO:0000318"/>
    <property type="project" value="GO_Central"/>
</dbReference>
<dbReference type="GO" id="GO:0003735">
    <property type="term" value="F:structural constituent of ribosome"/>
    <property type="evidence" value="ECO:0000250"/>
    <property type="project" value="UniProtKB"/>
</dbReference>
<dbReference type="GO" id="GO:0032543">
    <property type="term" value="P:mitochondrial translation"/>
    <property type="evidence" value="ECO:0000250"/>
    <property type="project" value="UniProtKB"/>
</dbReference>
<dbReference type="GO" id="GO:0000028">
    <property type="term" value="P:ribosomal small subunit assembly"/>
    <property type="evidence" value="ECO:0000318"/>
    <property type="project" value="GO_Central"/>
</dbReference>
<dbReference type="GO" id="GO:0006412">
    <property type="term" value="P:translation"/>
    <property type="evidence" value="ECO:0000318"/>
    <property type="project" value="GO_Central"/>
</dbReference>
<dbReference type="CDD" id="cd14870">
    <property type="entry name" value="uS7_Mitochondria_Mammalian"/>
    <property type="match status" value="1"/>
</dbReference>
<dbReference type="FunFam" id="1.10.455.10:FF:000004">
    <property type="entry name" value="28S ribosomal protein S7, mitochondrial"/>
    <property type="match status" value="1"/>
</dbReference>
<dbReference type="Gene3D" id="1.10.455.10">
    <property type="entry name" value="Ribosomal protein S7 domain"/>
    <property type="match status" value="1"/>
</dbReference>
<dbReference type="InterPro" id="IPR000235">
    <property type="entry name" value="Ribosomal_uS7"/>
</dbReference>
<dbReference type="InterPro" id="IPR023798">
    <property type="entry name" value="Ribosomal_uS7_dom"/>
</dbReference>
<dbReference type="InterPro" id="IPR036823">
    <property type="entry name" value="Ribosomal_uS7_dom_sf"/>
</dbReference>
<dbReference type="PANTHER" id="PTHR11205">
    <property type="entry name" value="RIBOSOMAL PROTEIN S7"/>
    <property type="match status" value="1"/>
</dbReference>
<dbReference type="Pfam" id="PF00177">
    <property type="entry name" value="Ribosomal_S7"/>
    <property type="match status" value="1"/>
</dbReference>
<dbReference type="PIRSF" id="PIRSF002122">
    <property type="entry name" value="RPS7p_RPS7a_RPS5e_RPS7o"/>
    <property type="match status" value="1"/>
</dbReference>
<dbReference type="SUPFAM" id="SSF47973">
    <property type="entry name" value="Ribosomal protein S7"/>
    <property type="match status" value="1"/>
</dbReference>
<organism>
    <name type="scientific">Danio rerio</name>
    <name type="common">Zebrafish</name>
    <name type="synonym">Brachydanio rerio</name>
    <dbReference type="NCBI Taxonomy" id="7955"/>
    <lineage>
        <taxon>Eukaryota</taxon>
        <taxon>Metazoa</taxon>
        <taxon>Chordata</taxon>
        <taxon>Craniata</taxon>
        <taxon>Vertebrata</taxon>
        <taxon>Euteleostomi</taxon>
        <taxon>Actinopterygii</taxon>
        <taxon>Neopterygii</taxon>
        <taxon>Teleostei</taxon>
        <taxon>Ostariophysi</taxon>
        <taxon>Cypriniformes</taxon>
        <taxon>Danionidae</taxon>
        <taxon>Danioninae</taxon>
        <taxon>Danio</taxon>
    </lineage>
</organism>
<evidence type="ECO:0000250" key="1">
    <source>
        <dbReference type="UniProtKB" id="Q3T040"/>
    </source>
</evidence>
<evidence type="ECO:0000255" key="2"/>
<evidence type="ECO:0000305" key="3"/>
<feature type="transit peptide" description="Mitochondrion" evidence="2">
    <location>
        <begin position="1"/>
        <end position="33"/>
    </location>
</feature>
<feature type="chain" id="PRO_0000273060" description="Small ribosomal subunit protein uS7m">
    <location>
        <begin position="34"/>
        <end position="228"/>
    </location>
</feature>
<name>RT07_DANRE</name>
<sequence length="228" mass="26514">MAASVRHLLKPWTPSLCLMRWSRYNPYYLDPEPRKDAPVSDSELSPEQKELQELKTVRPIKAALTGDTSSAFSDPLISKFINMMMYDGNKVLARGIMTQTLETIKRKQVEKYHKSPAAKREEIECNPYAIFHQAMENCKPVIGLASIQKGGKFYQVPVPLTDNRRRFMAMKWMITECRTNKQGRTLMYEKLSQELLAAFANEGNVIKRKHDLHKMAEANRAYAHYRWW</sequence>
<gene>
    <name type="primary">mrps7</name>
    <name type="ORF">zgc:110673</name>
</gene>
<comment type="subunit">
    <text evidence="1">Component of the mitochondrial ribosome small subunit (28S) which comprises a 12S rRNA and about 30 distinct proteins.</text>
</comment>
<comment type="subcellular location">
    <subcellularLocation>
        <location evidence="1">Mitochondrion</location>
    </subcellularLocation>
</comment>
<comment type="similarity">
    <text evidence="3">Belongs to the universal ribosomal protein uS7 family.</text>
</comment>
<protein>
    <recommendedName>
        <fullName evidence="3">Small ribosomal subunit protein uS7m</fullName>
    </recommendedName>
    <alternativeName>
        <fullName>28S ribosomal protein S7, mitochondrial</fullName>
        <shortName>MRP-S7</shortName>
        <shortName>S7mt</shortName>
    </alternativeName>
</protein>
<accession>Q498Z6</accession>